<name>HTPG_BURP1</name>
<accession>Q3JUM5</accession>
<sequence>MTQQTMSFQAEVKQLLHLMIHSLYSNKEIFLRELVSNASDAADKLRFEALENNALYESDPNLRIRLSFDKAARTITIDDNGIGMSRDEAIANLGTIARSGTKEFFSKLSGDQQKDAALIGQFGVGFYSGFIVADRITVETRRAGLPASEGVRWESAGEGDFQVDTIERAARGTTITLHLREGEDELLSSYRLKSIVQKYSDHVALPILMKKEEWDQEKGEMVEKDEDETINQASALWTRAKSEVTDEQYKQFYQHVAHDHQDPLAWTHNRVEGRSEYTQLLFVPSHAPFDLWNRDYRGGLKLYVKRVFIMDDAEQLLPQYLRFIKGVVDSSDLPLNVSREILQESRDVKAIREGVTKRALSMLEELANAEDDAGKEKYKTFWSAFGQVLKEGVGEDHANRERVAKLLRFASTHGDTDAQDVALADYVARMKPEQTKIYYVTADTWQAAKNSPHLEVFRKKGVEVLLLTDRVDEWMLSFLHEFDGKPLASVARGDLDLGALNDDEKKAQEETGEAMKPVVDKMKETLGEKVKDVRVTFRLTDSPSCLVADDNDMSGYLQRMLKAAGQSAPSFQPILEINPEHPLVKALKADGADFGDWCHLLFDQALLAEGGALEDPASFVKRTNALLLSRAA</sequence>
<proteinExistence type="inferred from homology"/>
<protein>
    <recommendedName>
        <fullName evidence="1">Chaperone protein HtpG</fullName>
    </recommendedName>
    <alternativeName>
        <fullName evidence="1">Heat shock protein HtpG</fullName>
    </alternativeName>
    <alternativeName>
        <fullName evidence="1">High temperature protein G</fullName>
    </alternativeName>
</protein>
<dbReference type="EMBL" id="CP000124">
    <property type="protein sequence ID" value="ABA48452.1"/>
    <property type="molecule type" value="Genomic_DNA"/>
</dbReference>
<dbReference type="RefSeq" id="WP_004185742.1">
    <property type="nucleotide sequence ID" value="NC_007434.1"/>
</dbReference>
<dbReference type="SMR" id="Q3JUM5"/>
<dbReference type="EnsemblBacteria" id="ABA48452">
    <property type="protein sequence ID" value="ABA48452"/>
    <property type="gene ID" value="BURPS1710b_1318"/>
</dbReference>
<dbReference type="GeneID" id="93059584"/>
<dbReference type="KEGG" id="bpm:BURPS1710b_1318"/>
<dbReference type="HOGENOM" id="CLU_006684_3_0_4"/>
<dbReference type="Proteomes" id="UP000002700">
    <property type="component" value="Chromosome I"/>
</dbReference>
<dbReference type="GO" id="GO:0005737">
    <property type="term" value="C:cytoplasm"/>
    <property type="evidence" value="ECO:0007669"/>
    <property type="project" value="UniProtKB-SubCell"/>
</dbReference>
<dbReference type="GO" id="GO:0005524">
    <property type="term" value="F:ATP binding"/>
    <property type="evidence" value="ECO:0007669"/>
    <property type="project" value="UniProtKB-UniRule"/>
</dbReference>
<dbReference type="GO" id="GO:0016887">
    <property type="term" value="F:ATP hydrolysis activity"/>
    <property type="evidence" value="ECO:0007669"/>
    <property type="project" value="InterPro"/>
</dbReference>
<dbReference type="GO" id="GO:0140662">
    <property type="term" value="F:ATP-dependent protein folding chaperone"/>
    <property type="evidence" value="ECO:0007669"/>
    <property type="project" value="InterPro"/>
</dbReference>
<dbReference type="GO" id="GO:0051082">
    <property type="term" value="F:unfolded protein binding"/>
    <property type="evidence" value="ECO:0007669"/>
    <property type="project" value="UniProtKB-UniRule"/>
</dbReference>
<dbReference type="CDD" id="cd16927">
    <property type="entry name" value="HATPase_Hsp90-like"/>
    <property type="match status" value="1"/>
</dbReference>
<dbReference type="FunFam" id="3.30.230.80:FF:000002">
    <property type="entry name" value="Molecular chaperone HtpG"/>
    <property type="match status" value="1"/>
</dbReference>
<dbReference type="FunFam" id="3.30.565.10:FF:000009">
    <property type="entry name" value="Molecular chaperone HtpG"/>
    <property type="match status" value="1"/>
</dbReference>
<dbReference type="Gene3D" id="3.30.230.80">
    <property type="match status" value="1"/>
</dbReference>
<dbReference type="Gene3D" id="3.40.50.11260">
    <property type="match status" value="1"/>
</dbReference>
<dbReference type="Gene3D" id="1.20.120.790">
    <property type="entry name" value="Heat shock protein 90, C-terminal domain"/>
    <property type="match status" value="1"/>
</dbReference>
<dbReference type="Gene3D" id="3.30.565.10">
    <property type="entry name" value="Histidine kinase-like ATPase, C-terminal domain"/>
    <property type="match status" value="1"/>
</dbReference>
<dbReference type="HAMAP" id="MF_00505">
    <property type="entry name" value="HSP90"/>
    <property type="match status" value="1"/>
</dbReference>
<dbReference type="InterPro" id="IPR036890">
    <property type="entry name" value="HATPase_C_sf"/>
</dbReference>
<dbReference type="InterPro" id="IPR019805">
    <property type="entry name" value="Heat_shock_protein_90_CS"/>
</dbReference>
<dbReference type="InterPro" id="IPR037196">
    <property type="entry name" value="HSP90_C"/>
</dbReference>
<dbReference type="InterPro" id="IPR001404">
    <property type="entry name" value="Hsp90_fam"/>
</dbReference>
<dbReference type="InterPro" id="IPR020575">
    <property type="entry name" value="Hsp90_N"/>
</dbReference>
<dbReference type="InterPro" id="IPR020568">
    <property type="entry name" value="Ribosomal_Su5_D2-typ_SF"/>
</dbReference>
<dbReference type="NCBIfam" id="NF003555">
    <property type="entry name" value="PRK05218.1"/>
    <property type="match status" value="1"/>
</dbReference>
<dbReference type="PANTHER" id="PTHR11528">
    <property type="entry name" value="HEAT SHOCK PROTEIN 90 FAMILY MEMBER"/>
    <property type="match status" value="1"/>
</dbReference>
<dbReference type="Pfam" id="PF13589">
    <property type="entry name" value="HATPase_c_3"/>
    <property type="match status" value="1"/>
</dbReference>
<dbReference type="Pfam" id="PF00183">
    <property type="entry name" value="HSP90"/>
    <property type="match status" value="1"/>
</dbReference>
<dbReference type="PIRSF" id="PIRSF002583">
    <property type="entry name" value="Hsp90"/>
    <property type="match status" value="1"/>
</dbReference>
<dbReference type="PRINTS" id="PR00775">
    <property type="entry name" value="HEATSHOCK90"/>
</dbReference>
<dbReference type="SMART" id="SM00387">
    <property type="entry name" value="HATPase_c"/>
    <property type="match status" value="1"/>
</dbReference>
<dbReference type="SUPFAM" id="SSF55874">
    <property type="entry name" value="ATPase domain of HSP90 chaperone/DNA topoisomerase II/histidine kinase"/>
    <property type="match status" value="1"/>
</dbReference>
<dbReference type="SUPFAM" id="SSF110942">
    <property type="entry name" value="HSP90 C-terminal domain"/>
    <property type="match status" value="1"/>
</dbReference>
<dbReference type="SUPFAM" id="SSF54211">
    <property type="entry name" value="Ribosomal protein S5 domain 2-like"/>
    <property type="match status" value="1"/>
</dbReference>
<dbReference type="PROSITE" id="PS00298">
    <property type="entry name" value="HSP90"/>
    <property type="match status" value="1"/>
</dbReference>
<gene>
    <name evidence="1" type="primary">htpG</name>
    <name type="ordered locus">BURPS1710b_1318</name>
</gene>
<comment type="function">
    <text evidence="1">Molecular chaperone. Has ATPase activity.</text>
</comment>
<comment type="subunit">
    <text evidence="1">Homodimer.</text>
</comment>
<comment type="subcellular location">
    <subcellularLocation>
        <location evidence="1">Cytoplasm</location>
    </subcellularLocation>
</comment>
<comment type="similarity">
    <text evidence="1">Belongs to the heat shock protein 90 family.</text>
</comment>
<feature type="chain" id="PRO_0000236986" description="Chaperone protein HtpG">
    <location>
        <begin position="1"/>
        <end position="632"/>
    </location>
</feature>
<feature type="region of interest" description="A; substrate-binding" evidence="1">
    <location>
        <begin position="1"/>
        <end position="339"/>
    </location>
</feature>
<feature type="region of interest" description="B" evidence="1">
    <location>
        <begin position="340"/>
        <end position="559"/>
    </location>
</feature>
<feature type="region of interest" description="C" evidence="1">
    <location>
        <begin position="560"/>
        <end position="632"/>
    </location>
</feature>
<reference key="1">
    <citation type="journal article" date="2010" name="Genome Biol. Evol.">
        <title>Continuing evolution of Burkholderia mallei through genome reduction and large-scale rearrangements.</title>
        <authorList>
            <person name="Losada L."/>
            <person name="Ronning C.M."/>
            <person name="DeShazer D."/>
            <person name="Woods D."/>
            <person name="Fedorova N."/>
            <person name="Kim H.S."/>
            <person name="Shabalina S.A."/>
            <person name="Pearson T.R."/>
            <person name="Brinkac L."/>
            <person name="Tan P."/>
            <person name="Nandi T."/>
            <person name="Crabtree J."/>
            <person name="Badger J."/>
            <person name="Beckstrom-Sternberg S."/>
            <person name="Saqib M."/>
            <person name="Schutzer S.E."/>
            <person name="Keim P."/>
            <person name="Nierman W.C."/>
        </authorList>
    </citation>
    <scope>NUCLEOTIDE SEQUENCE [LARGE SCALE GENOMIC DNA]</scope>
    <source>
        <strain>1710b</strain>
    </source>
</reference>
<evidence type="ECO:0000255" key="1">
    <source>
        <dbReference type="HAMAP-Rule" id="MF_00505"/>
    </source>
</evidence>
<organism>
    <name type="scientific">Burkholderia pseudomallei (strain 1710b)</name>
    <dbReference type="NCBI Taxonomy" id="320372"/>
    <lineage>
        <taxon>Bacteria</taxon>
        <taxon>Pseudomonadati</taxon>
        <taxon>Pseudomonadota</taxon>
        <taxon>Betaproteobacteria</taxon>
        <taxon>Burkholderiales</taxon>
        <taxon>Burkholderiaceae</taxon>
        <taxon>Burkholderia</taxon>
        <taxon>pseudomallei group</taxon>
    </lineage>
</organism>
<keyword id="KW-0067">ATP-binding</keyword>
<keyword id="KW-0143">Chaperone</keyword>
<keyword id="KW-0963">Cytoplasm</keyword>
<keyword id="KW-0547">Nucleotide-binding</keyword>
<keyword id="KW-0346">Stress response</keyword>